<comment type="function">
    <text evidence="1">Necessary for normal cell division and for the maintenance of normal septation.</text>
</comment>
<comment type="cofactor">
    <cofactor evidence="1">
        <name>Mg(2+)</name>
        <dbReference type="ChEBI" id="CHEBI:18420"/>
    </cofactor>
</comment>
<comment type="similarity">
    <text evidence="1">Belongs to the TRAFAC class TrmE-Era-EngA-EngB-Septin-like GTPase superfamily. EngB GTPase family.</text>
</comment>
<accession>Q026Q1</accession>
<gene>
    <name evidence="1" type="primary">engB</name>
    <name type="ordered locus">Acid_2028</name>
</gene>
<keyword id="KW-0131">Cell cycle</keyword>
<keyword id="KW-0132">Cell division</keyword>
<keyword id="KW-0342">GTP-binding</keyword>
<keyword id="KW-0460">Magnesium</keyword>
<keyword id="KW-0479">Metal-binding</keyword>
<keyword id="KW-0547">Nucleotide-binding</keyword>
<keyword id="KW-0717">Septation</keyword>
<sequence length="191" mass="21804">MSSLKAEFVVSSGKPDTFPSDRLPEIAFLGRSNVGKSSLINALTGHKKLAFTSNTPGRTQTINFYRVDEKFYLVDLPGYGYARVPAGFAEQWKVLIEHYLEFRETLKFSCLILDTRRGWMEKDLDLKRWLDHHGRPYLVVATKTDKLNQSEQERGLRAIRQEGVEPLPFSALSGRGVREIWQAITTTLQAR</sequence>
<protein>
    <recommendedName>
        <fullName evidence="1">Probable GTP-binding protein EngB</fullName>
    </recommendedName>
</protein>
<name>ENGB_SOLUE</name>
<feature type="chain" id="PRO_1000189933" description="Probable GTP-binding protein EngB">
    <location>
        <begin position="1"/>
        <end position="191"/>
    </location>
</feature>
<feature type="domain" description="EngB-type G" evidence="1">
    <location>
        <begin position="22"/>
        <end position="190"/>
    </location>
</feature>
<feature type="binding site" evidence="1">
    <location>
        <begin position="30"/>
        <end position="37"/>
    </location>
    <ligand>
        <name>GTP</name>
        <dbReference type="ChEBI" id="CHEBI:37565"/>
    </ligand>
</feature>
<feature type="binding site" evidence="1">
    <location>
        <position position="37"/>
    </location>
    <ligand>
        <name>Mg(2+)</name>
        <dbReference type="ChEBI" id="CHEBI:18420"/>
    </ligand>
</feature>
<feature type="binding site" evidence="1">
    <location>
        <begin position="57"/>
        <end position="61"/>
    </location>
    <ligand>
        <name>GTP</name>
        <dbReference type="ChEBI" id="CHEBI:37565"/>
    </ligand>
</feature>
<feature type="binding site" evidence="1">
    <location>
        <position position="59"/>
    </location>
    <ligand>
        <name>Mg(2+)</name>
        <dbReference type="ChEBI" id="CHEBI:18420"/>
    </ligand>
</feature>
<feature type="binding site" evidence="1">
    <location>
        <begin position="75"/>
        <end position="78"/>
    </location>
    <ligand>
        <name>GTP</name>
        <dbReference type="ChEBI" id="CHEBI:37565"/>
    </ligand>
</feature>
<feature type="binding site" evidence="1">
    <location>
        <begin position="142"/>
        <end position="145"/>
    </location>
    <ligand>
        <name>GTP</name>
        <dbReference type="ChEBI" id="CHEBI:37565"/>
    </ligand>
</feature>
<feature type="binding site" evidence="1">
    <location>
        <begin position="169"/>
        <end position="171"/>
    </location>
    <ligand>
        <name>GTP</name>
        <dbReference type="ChEBI" id="CHEBI:37565"/>
    </ligand>
</feature>
<evidence type="ECO:0000255" key="1">
    <source>
        <dbReference type="HAMAP-Rule" id="MF_00321"/>
    </source>
</evidence>
<reference key="1">
    <citation type="journal article" date="2009" name="Appl. Environ. Microbiol.">
        <title>Three genomes from the phylum Acidobacteria provide insight into the lifestyles of these microorganisms in soils.</title>
        <authorList>
            <person name="Ward N.L."/>
            <person name="Challacombe J.F."/>
            <person name="Janssen P.H."/>
            <person name="Henrissat B."/>
            <person name="Coutinho P.M."/>
            <person name="Wu M."/>
            <person name="Xie G."/>
            <person name="Haft D.H."/>
            <person name="Sait M."/>
            <person name="Badger J."/>
            <person name="Barabote R.D."/>
            <person name="Bradley B."/>
            <person name="Brettin T.S."/>
            <person name="Brinkac L.M."/>
            <person name="Bruce D."/>
            <person name="Creasy T."/>
            <person name="Daugherty S.C."/>
            <person name="Davidsen T.M."/>
            <person name="DeBoy R.T."/>
            <person name="Detter J.C."/>
            <person name="Dodson R.J."/>
            <person name="Durkin A.S."/>
            <person name="Ganapathy A."/>
            <person name="Gwinn-Giglio M."/>
            <person name="Han C.S."/>
            <person name="Khouri H."/>
            <person name="Kiss H."/>
            <person name="Kothari S.P."/>
            <person name="Madupu R."/>
            <person name="Nelson K.E."/>
            <person name="Nelson W.C."/>
            <person name="Paulsen I."/>
            <person name="Penn K."/>
            <person name="Ren Q."/>
            <person name="Rosovitz M.J."/>
            <person name="Selengut J.D."/>
            <person name="Shrivastava S."/>
            <person name="Sullivan S.A."/>
            <person name="Tapia R."/>
            <person name="Thompson L.S."/>
            <person name="Watkins K.L."/>
            <person name="Yang Q."/>
            <person name="Yu C."/>
            <person name="Zafar N."/>
            <person name="Zhou L."/>
            <person name="Kuske C.R."/>
        </authorList>
    </citation>
    <scope>NUCLEOTIDE SEQUENCE [LARGE SCALE GENOMIC DNA]</scope>
    <source>
        <strain>Ellin6076</strain>
    </source>
</reference>
<proteinExistence type="inferred from homology"/>
<dbReference type="EMBL" id="CP000473">
    <property type="protein sequence ID" value="ABJ83018.1"/>
    <property type="molecule type" value="Genomic_DNA"/>
</dbReference>
<dbReference type="SMR" id="Q026Q1"/>
<dbReference type="FunCoup" id="Q026Q1">
    <property type="interactions" value="393"/>
</dbReference>
<dbReference type="STRING" id="234267.Acid_2028"/>
<dbReference type="KEGG" id="sus:Acid_2028"/>
<dbReference type="eggNOG" id="COG0218">
    <property type="taxonomic scope" value="Bacteria"/>
</dbReference>
<dbReference type="HOGENOM" id="CLU_033732_3_0_0"/>
<dbReference type="InParanoid" id="Q026Q1"/>
<dbReference type="OrthoDB" id="9804921at2"/>
<dbReference type="GO" id="GO:0005525">
    <property type="term" value="F:GTP binding"/>
    <property type="evidence" value="ECO:0007669"/>
    <property type="project" value="UniProtKB-UniRule"/>
</dbReference>
<dbReference type="GO" id="GO:0046872">
    <property type="term" value="F:metal ion binding"/>
    <property type="evidence" value="ECO:0007669"/>
    <property type="project" value="UniProtKB-KW"/>
</dbReference>
<dbReference type="GO" id="GO:0000917">
    <property type="term" value="P:division septum assembly"/>
    <property type="evidence" value="ECO:0007669"/>
    <property type="project" value="UniProtKB-KW"/>
</dbReference>
<dbReference type="CDD" id="cd01876">
    <property type="entry name" value="YihA_EngB"/>
    <property type="match status" value="1"/>
</dbReference>
<dbReference type="Gene3D" id="3.40.50.300">
    <property type="entry name" value="P-loop containing nucleotide triphosphate hydrolases"/>
    <property type="match status" value="1"/>
</dbReference>
<dbReference type="HAMAP" id="MF_00321">
    <property type="entry name" value="GTPase_EngB"/>
    <property type="match status" value="1"/>
</dbReference>
<dbReference type="InterPro" id="IPR030393">
    <property type="entry name" value="G_ENGB_dom"/>
</dbReference>
<dbReference type="InterPro" id="IPR006073">
    <property type="entry name" value="GTP-bd"/>
</dbReference>
<dbReference type="InterPro" id="IPR019987">
    <property type="entry name" value="GTP-bd_ribosome_bio_YsxC"/>
</dbReference>
<dbReference type="InterPro" id="IPR027417">
    <property type="entry name" value="P-loop_NTPase"/>
</dbReference>
<dbReference type="InterPro" id="IPR005225">
    <property type="entry name" value="Small_GTP-bd"/>
</dbReference>
<dbReference type="NCBIfam" id="TIGR03598">
    <property type="entry name" value="GTPase_YsxC"/>
    <property type="match status" value="1"/>
</dbReference>
<dbReference type="NCBIfam" id="TIGR00231">
    <property type="entry name" value="small_GTP"/>
    <property type="match status" value="1"/>
</dbReference>
<dbReference type="PANTHER" id="PTHR11649:SF13">
    <property type="entry name" value="ENGB-TYPE G DOMAIN-CONTAINING PROTEIN"/>
    <property type="match status" value="1"/>
</dbReference>
<dbReference type="PANTHER" id="PTHR11649">
    <property type="entry name" value="MSS1/TRME-RELATED GTP-BINDING PROTEIN"/>
    <property type="match status" value="1"/>
</dbReference>
<dbReference type="Pfam" id="PF01926">
    <property type="entry name" value="MMR_HSR1"/>
    <property type="match status" value="1"/>
</dbReference>
<dbReference type="SUPFAM" id="SSF52540">
    <property type="entry name" value="P-loop containing nucleoside triphosphate hydrolases"/>
    <property type="match status" value="1"/>
</dbReference>
<dbReference type="PROSITE" id="PS51706">
    <property type="entry name" value="G_ENGB"/>
    <property type="match status" value="1"/>
</dbReference>
<organism>
    <name type="scientific">Solibacter usitatus (strain Ellin6076)</name>
    <dbReference type="NCBI Taxonomy" id="234267"/>
    <lineage>
        <taxon>Bacteria</taxon>
        <taxon>Pseudomonadati</taxon>
        <taxon>Acidobacteriota</taxon>
        <taxon>Terriglobia</taxon>
        <taxon>Bryobacterales</taxon>
        <taxon>Solibacteraceae</taxon>
        <taxon>Candidatus Solibacter</taxon>
    </lineage>
</organism>